<accession>B1JEQ2</accession>
<protein>
    <recommendedName>
        <fullName evidence="1">Large ribosomal subunit protein bL25</fullName>
    </recommendedName>
    <alternativeName>
        <fullName evidence="2">50S ribosomal protein L25</fullName>
    </alternativeName>
    <alternativeName>
        <fullName evidence="1">General stress protein CTC</fullName>
    </alternativeName>
</protein>
<name>RL25_PSEPW</name>
<organism>
    <name type="scientific">Pseudomonas putida (strain W619)</name>
    <dbReference type="NCBI Taxonomy" id="390235"/>
    <lineage>
        <taxon>Bacteria</taxon>
        <taxon>Pseudomonadati</taxon>
        <taxon>Pseudomonadota</taxon>
        <taxon>Gammaproteobacteria</taxon>
        <taxon>Pseudomonadales</taxon>
        <taxon>Pseudomonadaceae</taxon>
        <taxon>Pseudomonas</taxon>
    </lineage>
</organism>
<gene>
    <name evidence="1" type="primary">rplY</name>
    <name evidence="1" type="synonym">ctc</name>
    <name type="ordered locus">PputW619_4462</name>
</gene>
<evidence type="ECO:0000255" key="1">
    <source>
        <dbReference type="HAMAP-Rule" id="MF_01334"/>
    </source>
</evidence>
<evidence type="ECO:0000305" key="2"/>
<sequence length="198" mass="21255">MTDFTLNAQVRSDLGKGASRRLRHSLNIPAVVYGGDKEAQSLTIVAKEIAKLFENEAAFSHVIELNVDGAKQNVVVKAMQRHPAKGFIMHADFVRVVAGQKLTAVVPVHFINEEAPVKKGGEISHVESQIEVSCEAKDLPEFIEVDLGNAEIGTIIHLSDLKAPKGVEFVALAHGDDKAVANVHAPRVAPEAEEGAAE</sequence>
<keyword id="KW-0687">Ribonucleoprotein</keyword>
<keyword id="KW-0689">Ribosomal protein</keyword>
<keyword id="KW-0694">RNA-binding</keyword>
<keyword id="KW-0699">rRNA-binding</keyword>
<comment type="function">
    <text evidence="1">This is one of the proteins that binds to the 5S RNA in the ribosome where it forms part of the central protuberance.</text>
</comment>
<comment type="subunit">
    <text evidence="1">Part of the 50S ribosomal subunit; part of the 5S rRNA/L5/L18/L25 subcomplex. Contacts the 5S rRNA. Binds to the 5S rRNA independently of L5 and L18.</text>
</comment>
<comment type="similarity">
    <text evidence="1">Belongs to the bacterial ribosomal protein bL25 family. CTC subfamily.</text>
</comment>
<dbReference type="EMBL" id="CP000949">
    <property type="protein sequence ID" value="ACA74942.1"/>
    <property type="molecule type" value="Genomic_DNA"/>
</dbReference>
<dbReference type="SMR" id="B1JEQ2"/>
<dbReference type="STRING" id="390235.PputW619_4462"/>
<dbReference type="KEGG" id="ppw:PputW619_4462"/>
<dbReference type="eggNOG" id="COG1825">
    <property type="taxonomic scope" value="Bacteria"/>
</dbReference>
<dbReference type="HOGENOM" id="CLU_075939_0_1_6"/>
<dbReference type="OrthoDB" id="9806411at2"/>
<dbReference type="GO" id="GO:0022625">
    <property type="term" value="C:cytosolic large ribosomal subunit"/>
    <property type="evidence" value="ECO:0007669"/>
    <property type="project" value="TreeGrafter"/>
</dbReference>
<dbReference type="GO" id="GO:0008097">
    <property type="term" value="F:5S rRNA binding"/>
    <property type="evidence" value="ECO:0007669"/>
    <property type="project" value="InterPro"/>
</dbReference>
<dbReference type="GO" id="GO:0003735">
    <property type="term" value="F:structural constituent of ribosome"/>
    <property type="evidence" value="ECO:0007669"/>
    <property type="project" value="InterPro"/>
</dbReference>
<dbReference type="GO" id="GO:0006412">
    <property type="term" value="P:translation"/>
    <property type="evidence" value="ECO:0007669"/>
    <property type="project" value="UniProtKB-UniRule"/>
</dbReference>
<dbReference type="CDD" id="cd00495">
    <property type="entry name" value="Ribosomal_L25_TL5_CTC"/>
    <property type="match status" value="1"/>
</dbReference>
<dbReference type="Gene3D" id="2.170.120.20">
    <property type="entry name" value="Ribosomal protein L25, beta domain"/>
    <property type="match status" value="1"/>
</dbReference>
<dbReference type="Gene3D" id="2.40.240.10">
    <property type="entry name" value="Ribosomal Protein L25, Chain P"/>
    <property type="match status" value="1"/>
</dbReference>
<dbReference type="HAMAP" id="MF_01336">
    <property type="entry name" value="Ribosomal_bL25"/>
    <property type="match status" value="1"/>
</dbReference>
<dbReference type="HAMAP" id="MF_01334">
    <property type="entry name" value="Ribosomal_bL25_CTC"/>
    <property type="match status" value="1"/>
</dbReference>
<dbReference type="InterPro" id="IPR020056">
    <property type="entry name" value="Rbsml_bL25/Gln-tRNA_synth_N"/>
</dbReference>
<dbReference type="InterPro" id="IPR011035">
    <property type="entry name" value="Ribosomal_bL25/Gln-tRNA_synth"/>
</dbReference>
<dbReference type="InterPro" id="IPR020057">
    <property type="entry name" value="Ribosomal_bL25_b-dom"/>
</dbReference>
<dbReference type="InterPro" id="IPR037121">
    <property type="entry name" value="Ribosomal_bL25_C"/>
</dbReference>
<dbReference type="InterPro" id="IPR001021">
    <property type="entry name" value="Ribosomal_bL25_long"/>
</dbReference>
<dbReference type="InterPro" id="IPR020055">
    <property type="entry name" value="Ribosomal_bL25_short"/>
</dbReference>
<dbReference type="InterPro" id="IPR029751">
    <property type="entry name" value="Ribosomal_L25_dom"/>
</dbReference>
<dbReference type="InterPro" id="IPR020930">
    <property type="entry name" value="Ribosomal_uL5_bac-type"/>
</dbReference>
<dbReference type="NCBIfam" id="TIGR00731">
    <property type="entry name" value="bL25_bact_ctc"/>
    <property type="match status" value="1"/>
</dbReference>
<dbReference type="NCBIfam" id="NF004128">
    <property type="entry name" value="PRK05618.1-2"/>
    <property type="match status" value="1"/>
</dbReference>
<dbReference type="NCBIfam" id="NF004130">
    <property type="entry name" value="PRK05618.1-5"/>
    <property type="match status" value="1"/>
</dbReference>
<dbReference type="NCBIfam" id="NF004612">
    <property type="entry name" value="PRK05943.1"/>
    <property type="match status" value="1"/>
</dbReference>
<dbReference type="PANTHER" id="PTHR33284">
    <property type="entry name" value="RIBOSOMAL PROTEIN L25/GLN-TRNA SYNTHETASE, ANTI-CODON-BINDING DOMAIN-CONTAINING PROTEIN"/>
    <property type="match status" value="1"/>
</dbReference>
<dbReference type="PANTHER" id="PTHR33284:SF1">
    <property type="entry name" value="RIBOSOMAL PROTEIN L25_GLN-TRNA SYNTHETASE, ANTI-CODON-BINDING DOMAIN-CONTAINING PROTEIN"/>
    <property type="match status" value="1"/>
</dbReference>
<dbReference type="Pfam" id="PF01386">
    <property type="entry name" value="Ribosomal_L25p"/>
    <property type="match status" value="1"/>
</dbReference>
<dbReference type="Pfam" id="PF14693">
    <property type="entry name" value="Ribosomal_TL5_C"/>
    <property type="match status" value="1"/>
</dbReference>
<dbReference type="SUPFAM" id="SSF50715">
    <property type="entry name" value="Ribosomal protein L25-like"/>
    <property type="match status" value="1"/>
</dbReference>
<reference key="1">
    <citation type="submission" date="2008-02" db="EMBL/GenBank/DDBJ databases">
        <title>Complete sequence of Pseudomonas putida W619.</title>
        <authorList>
            <person name="Copeland A."/>
            <person name="Lucas S."/>
            <person name="Lapidus A."/>
            <person name="Barry K."/>
            <person name="Detter J.C."/>
            <person name="Glavina del Rio T."/>
            <person name="Dalin E."/>
            <person name="Tice H."/>
            <person name="Pitluck S."/>
            <person name="Chain P."/>
            <person name="Malfatti S."/>
            <person name="Shin M."/>
            <person name="Vergez L."/>
            <person name="Schmutz J."/>
            <person name="Larimer F."/>
            <person name="Land M."/>
            <person name="Hauser L."/>
            <person name="Kyrpides N."/>
            <person name="Kim E."/>
            <person name="Taghavi S."/>
            <person name="Vangronsveld D."/>
            <person name="van der Lelie D."/>
            <person name="Richardson P."/>
        </authorList>
    </citation>
    <scope>NUCLEOTIDE SEQUENCE [LARGE SCALE GENOMIC DNA]</scope>
    <source>
        <strain>W619</strain>
    </source>
</reference>
<feature type="chain" id="PRO_1000142549" description="Large ribosomal subunit protein bL25">
    <location>
        <begin position="1"/>
        <end position="198"/>
    </location>
</feature>
<proteinExistence type="inferred from homology"/>